<protein>
    <recommendedName>
        <fullName>Protein ZIP2</fullName>
    </recommendedName>
    <alternativeName>
        <fullName>Zipping up meiotic chromosomes protein 2</fullName>
    </alternativeName>
</protein>
<gene>
    <name type="primary">ZIP2</name>
    <name type="ordered locus">YGL249W</name>
    <name type="ORF">NRC704</name>
</gene>
<name>ZIP2_YEAST</name>
<comment type="function">
    <text evidence="1 2 3 4 5 6 7">Required for initiation of meiotic chromosome synapsis. Involved in synaptonemal complex formation, a structure that tethers a pair of homologous chromosomes along their lengths and plays a central role in recombination and homolog segregation during meiosis. Required for the normal localization of MSH4 to chromosomes.</text>
</comment>
<comment type="subunit">
    <text evidence="3">Interacts with ZIP3.</text>
</comment>
<comment type="subcellular location">
    <subcellularLocation>
        <location>Nucleus</location>
    </subcellularLocation>
    <subcellularLocation>
        <location>Chromosome</location>
    </subcellularLocation>
    <text>localizes to a meiosis specific chromosomal structure called the synaptonemal complex (SC) formed during meiotic prophase.</text>
</comment>
<comment type="induction">
    <text evidence="7">During meiosis.</text>
</comment>
<comment type="similarity">
    <text evidence="8">Belongs to the ZIP2 family.</text>
</comment>
<feature type="chain" id="PRO_0000202706" description="Protein ZIP2">
    <location>
        <begin position="1"/>
        <end position="704"/>
    </location>
</feature>
<feature type="strand" evidence="9">
    <location>
        <begin position="501"/>
        <end position="506"/>
    </location>
</feature>
<feature type="helix" evidence="9">
    <location>
        <begin position="507"/>
        <end position="509"/>
    </location>
</feature>
<feature type="turn" evidence="9">
    <location>
        <begin position="510"/>
        <end position="513"/>
    </location>
</feature>
<feature type="helix" evidence="9">
    <location>
        <begin position="514"/>
        <end position="521"/>
    </location>
</feature>
<feature type="strand" evidence="9">
    <location>
        <begin position="527"/>
        <end position="531"/>
    </location>
</feature>
<feature type="strand" evidence="9">
    <location>
        <begin position="534"/>
        <end position="536"/>
    </location>
</feature>
<feature type="strand" evidence="9">
    <location>
        <begin position="538"/>
        <end position="542"/>
    </location>
</feature>
<feature type="strand" evidence="9">
    <location>
        <begin position="545"/>
        <end position="551"/>
    </location>
</feature>
<feature type="helix" evidence="9">
    <location>
        <begin position="552"/>
        <end position="554"/>
    </location>
</feature>
<feature type="strand" evidence="9">
    <location>
        <begin position="562"/>
        <end position="564"/>
    </location>
</feature>
<feature type="helix" evidence="9">
    <location>
        <begin position="567"/>
        <end position="576"/>
    </location>
</feature>
<feature type="strand" evidence="9">
    <location>
        <begin position="578"/>
        <end position="586"/>
    </location>
</feature>
<feature type="helix" evidence="9">
    <location>
        <begin position="588"/>
        <end position="593"/>
    </location>
</feature>
<feature type="helix" evidence="9">
    <location>
        <begin position="597"/>
        <end position="604"/>
    </location>
</feature>
<feature type="strand" evidence="9">
    <location>
        <begin position="610"/>
        <end position="618"/>
    </location>
</feature>
<feature type="helix" evidence="9">
    <location>
        <begin position="619"/>
        <end position="633"/>
    </location>
</feature>
<feature type="helix" evidence="9">
    <location>
        <begin position="648"/>
        <end position="653"/>
    </location>
</feature>
<feature type="helix" evidence="9">
    <location>
        <begin position="658"/>
        <end position="667"/>
    </location>
</feature>
<feature type="helix" evidence="9">
    <location>
        <begin position="670"/>
        <end position="678"/>
    </location>
</feature>
<feature type="helix" evidence="9">
    <location>
        <begin position="682"/>
        <end position="685"/>
    </location>
</feature>
<feature type="helix" evidence="9">
    <location>
        <begin position="690"/>
        <end position="701"/>
    </location>
</feature>
<proteinExistence type="evidence at protein level"/>
<reference key="1">
    <citation type="journal article" date="1996" name="Yeast">
        <title>Sequence of a 39,411 bp DNA fragment covering the left end of chromosome VII of Saccharomyces cerevisiae.</title>
        <authorList>
            <person name="Coissac E."/>
            <person name="Maillier E."/>
            <person name="Robineau S."/>
            <person name="Netter P."/>
        </authorList>
    </citation>
    <scope>NUCLEOTIDE SEQUENCE [GENOMIC DNA]</scope>
    <source>
        <strain>ATCC 96604 / S288c / FY1679</strain>
    </source>
</reference>
<reference key="2">
    <citation type="journal article" date="1997" name="Nature">
        <title>The nucleotide sequence of Saccharomyces cerevisiae chromosome VII.</title>
        <authorList>
            <person name="Tettelin H."/>
            <person name="Agostoni-Carbone M.L."/>
            <person name="Albermann K."/>
            <person name="Albers M."/>
            <person name="Arroyo J."/>
            <person name="Backes U."/>
            <person name="Barreiros T."/>
            <person name="Bertani I."/>
            <person name="Bjourson A.J."/>
            <person name="Brueckner M."/>
            <person name="Bruschi C.V."/>
            <person name="Carignani G."/>
            <person name="Castagnoli L."/>
            <person name="Cerdan E."/>
            <person name="Clemente M.L."/>
            <person name="Coblenz A."/>
            <person name="Coglievina M."/>
            <person name="Coissac E."/>
            <person name="Defoor E."/>
            <person name="Del Bino S."/>
            <person name="Delius H."/>
            <person name="Delneri D."/>
            <person name="de Wergifosse P."/>
            <person name="Dujon B."/>
            <person name="Durand P."/>
            <person name="Entian K.-D."/>
            <person name="Eraso P."/>
            <person name="Escribano V."/>
            <person name="Fabiani L."/>
            <person name="Fartmann B."/>
            <person name="Feroli F."/>
            <person name="Feuermann M."/>
            <person name="Frontali L."/>
            <person name="Garcia-Gonzalez M."/>
            <person name="Garcia-Saez M.I."/>
            <person name="Goffeau A."/>
            <person name="Guerreiro P."/>
            <person name="Hani J."/>
            <person name="Hansen M."/>
            <person name="Hebling U."/>
            <person name="Hernandez K."/>
            <person name="Heumann K."/>
            <person name="Hilger F."/>
            <person name="Hofmann B."/>
            <person name="Indge K.J."/>
            <person name="James C.M."/>
            <person name="Klima R."/>
            <person name="Koetter P."/>
            <person name="Kramer B."/>
            <person name="Kramer W."/>
            <person name="Lauquin G."/>
            <person name="Leuther H."/>
            <person name="Louis E.J."/>
            <person name="Maillier E."/>
            <person name="Marconi A."/>
            <person name="Martegani E."/>
            <person name="Mazon M.J."/>
            <person name="Mazzoni C."/>
            <person name="McReynolds A.D.K."/>
            <person name="Melchioretto P."/>
            <person name="Mewes H.-W."/>
            <person name="Minenkova O."/>
            <person name="Mueller-Auer S."/>
            <person name="Nawrocki A."/>
            <person name="Netter P."/>
            <person name="Neu R."/>
            <person name="Nombela C."/>
            <person name="Oliver S.G."/>
            <person name="Panzeri L."/>
            <person name="Paoluzi S."/>
            <person name="Plevani P."/>
            <person name="Portetelle D."/>
            <person name="Portillo F."/>
            <person name="Potier S."/>
            <person name="Purnelle B."/>
            <person name="Rieger M."/>
            <person name="Riles L."/>
            <person name="Rinaldi T."/>
            <person name="Robben J."/>
            <person name="Rodrigues-Pousada C."/>
            <person name="Rodriguez-Belmonte E."/>
            <person name="Rodriguez-Torres A.M."/>
            <person name="Rose M."/>
            <person name="Ruzzi M."/>
            <person name="Saliola M."/>
            <person name="Sanchez-Perez M."/>
            <person name="Schaefer B."/>
            <person name="Schaefer M."/>
            <person name="Scharfe M."/>
            <person name="Schmidheini T."/>
            <person name="Schreer A."/>
            <person name="Skala J."/>
            <person name="Souciet J.-L."/>
            <person name="Steensma H.Y."/>
            <person name="Talla E."/>
            <person name="Thierry A."/>
            <person name="Vandenbol M."/>
            <person name="van der Aart Q.J.M."/>
            <person name="Van Dyck L."/>
            <person name="Vanoni M."/>
            <person name="Verhasselt P."/>
            <person name="Voet M."/>
            <person name="Volckaert G."/>
            <person name="Wambutt R."/>
            <person name="Watson M.D."/>
            <person name="Weber N."/>
            <person name="Wedler E."/>
            <person name="Wedler H."/>
            <person name="Wipfli P."/>
            <person name="Wolf K."/>
            <person name="Wright L.F."/>
            <person name="Zaccaria P."/>
            <person name="Zimmermann M."/>
            <person name="Zollner A."/>
            <person name="Kleine K."/>
        </authorList>
    </citation>
    <scope>NUCLEOTIDE SEQUENCE [LARGE SCALE GENOMIC DNA]</scope>
    <source>
        <strain>ATCC 204508 / S288c</strain>
    </source>
</reference>
<reference key="3">
    <citation type="journal article" date="2014" name="G3 (Bethesda)">
        <title>The reference genome sequence of Saccharomyces cerevisiae: Then and now.</title>
        <authorList>
            <person name="Engel S.R."/>
            <person name="Dietrich F.S."/>
            <person name="Fisk D.G."/>
            <person name="Binkley G."/>
            <person name="Balakrishnan R."/>
            <person name="Costanzo M.C."/>
            <person name="Dwight S.S."/>
            <person name="Hitz B.C."/>
            <person name="Karra K."/>
            <person name="Nash R.S."/>
            <person name="Weng S."/>
            <person name="Wong E.D."/>
            <person name="Lloyd P."/>
            <person name="Skrzypek M.S."/>
            <person name="Miyasato S.R."/>
            <person name="Simison M."/>
            <person name="Cherry J.M."/>
        </authorList>
    </citation>
    <scope>GENOME REANNOTATION</scope>
    <source>
        <strain>ATCC 204508 / S288c</strain>
    </source>
</reference>
<reference key="4">
    <citation type="journal article" date="1998" name="Cell">
        <title>Zip2, a meiosis-specific protein required for the initiation of chromosome synapsis.</title>
        <authorList>
            <person name="Chua P.R."/>
            <person name="Roeder G.S."/>
        </authorList>
    </citation>
    <scope>FUNCTION</scope>
    <scope>INDUCTION</scope>
    <scope>SUBCELLULAR LOCATION</scope>
</reference>
<reference key="5">
    <citation type="journal article" date="1999" name="Cell">
        <title>Pch2 links chromatin silencing to meiotic checkpoint control.</title>
        <authorList>
            <person name="San-Segundo P.A."/>
            <person name="Roeder G.S."/>
        </authorList>
    </citation>
    <scope>FUNCTION</scope>
</reference>
<reference key="6">
    <citation type="journal article" date="2000" name="Cell">
        <title>Zip3 provides a link between recombination enzymes and synaptonemal complex proteins.</title>
        <authorList>
            <person name="Agarwal S."/>
            <person name="Roeder G.S."/>
        </authorList>
    </citation>
    <scope>FUNCTION</scope>
    <scope>SUBCELLULAR LOCATION</scope>
    <scope>INTERACTION WITH ZIP3</scope>
</reference>
<reference key="7">
    <citation type="journal article" date="2000" name="Mol. Cell. Biol.">
        <title>Bypass of a meiotic checkpoint by overproduction of meiotic chromosomal proteins.</title>
        <authorList>
            <person name="Bailis J.M."/>
            <person name="Smith A.V."/>
            <person name="Roeder G.S."/>
        </authorList>
    </citation>
    <scope>FUNCTION</scope>
</reference>
<reference key="8">
    <citation type="journal article" date="2001" name="Genetics">
        <title>The budding yeast Msh4 protein functions in chromosome synapsis and the regulation of crossover distribution.</title>
        <authorList>
            <person name="Novak J.E."/>
            <person name="Ross-Macdonald P.B."/>
            <person name="Roeder G.S."/>
        </authorList>
    </citation>
    <scope>FUNCTION</scope>
    <scope>SUBCELLULAR LOCATION</scope>
</reference>
<reference key="9">
    <citation type="journal article" date="2004" name="Cell">
        <title>Imposition of crossover interference through the nonrandom distribution of synapsis initiation complexes.</title>
        <authorList>
            <person name="Fung J.C."/>
            <person name="Rockmill B."/>
            <person name="Odell M."/>
            <person name="Roeder G.S."/>
        </authorList>
    </citation>
    <scope>SUBCELLULAR LOCATION</scope>
</reference>
<reference key="10">
    <citation type="journal article" date="2005" name="Genes Dev.">
        <title>Multiple branches of the meiotic recombination pathway contribute independently to homolog pairing and stable juxtaposition during meiosis in budding yeast.</title>
        <authorList>
            <person name="Peoples-Holst T.L."/>
            <person name="Burgess S.M."/>
        </authorList>
    </citation>
    <scope>FUNCTION</scope>
</reference>
<reference key="11">
    <citation type="journal article" date="2006" name="Dev. Cell">
        <title>The meiosis-specific zip4 protein regulates crossover distribution by promoting synaptonemal complex formation together with zip2.</title>
        <authorList>
            <person name="Tsubouchi T."/>
            <person name="Zhao H."/>
            <person name="Roeder G.S."/>
        </authorList>
    </citation>
    <scope>FUNCTION</scope>
    <scope>SUBCELLULAR LOCATION</scope>
</reference>
<dbReference type="EMBL" id="X94357">
    <property type="protein sequence ID" value="CAA64138.1"/>
    <property type="molecule type" value="Genomic_DNA"/>
</dbReference>
<dbReference type="EMBL" id="Z72771">
    <property type="protein sequence ID" value="CAA96969.1"/>
    <property type="molecule type" value="Genomic_DNA"/>
</dbReference>
<dbReference type="EMBL" id="BK006941">
    <property type="protein sequence ID" value="DAA07870.1"/>
    <property type="molecule type" value="Genomic_DNA"/>
</dbReference>
<dbReference type="PIR" id="S61612">
    <property type="entry name" value="S61612"/>
</dbReference>
<dbReference type="RefSeq" id="NP_011265.1">
    <property type="nucleotide sequence ID" value="NM_001181115.1"/>
</dbReference>
<dbReference type="PDB" id="6BZF">
    <property type="method" value="X-ray"/>
    <property type="resolution" value="2.29 A"/>
    <property type="chains" value="B/D/F/H=499-704"/>
</dbReference>
<dbReference type="PDB" id="6BZG">
    <property type="method" value="X-ray"/>
    <property type="resolution" value="2.13 A"/>
    <property type="chains" value="B=499-704"/>
</dbReference>
<dbReference type="PDBsum" id="6BZF"/>
<dbReference type="PDBsum" id="6BZG"/>
<dbReference type="SMR" id="P53061"/>
<dbReference type="BioGRID" id="33030">
    <property type="interactions" value="75"/>
</dbReference>
<dbReference type="ComplexPortal" id="CPX-1386">
    <property type="entry name" value="Synapsis initiation complex"/>
</dbReference>
<dbReference type="ComplexPortal" id="CPX-5441">
    <property type="entry name" value="SPO16:ZIP2"/>
</dbReference>
<dbReference type="ComplexPortal" id="CPX-5442">
    <property type="entry name" value="ZZS complex"/>
</dbReference>
<dbReference type="DIP" id="DIP-1241N"/>
<dbReference type="FunCoup" id="P53061">
    <property type="interactions" value="130"/>
</dbReference>
<dbReference type="IntAct" id="P53061">
    <property type="interactions" value="4"/>
</dbReference>
<dbReference type="MINT" id="P53061"/>
<dbReference type="STRING" id="4932.YGL249W"/>
<dbReference type="iPTMnet" id="P53061"/>
<dbReference type="PaxDb" id="4932-YGL249W"/>
<dbReference type="PeptideAtlas" id="P53061"/>
<dbReference type="EnsemblFungi" id="YGL249W_mRNA">
    <property type="protein sequence ID" value="YGL249W"/>
    <property type="gene ID" value="YGL249W"/>
</dbReference>
<dbReference type="GeneID" id="852643"/>
<dbReference type="KEGG" id="sce:YGL249W"/>
<dbReference type="AGR" id="SGD:S000003218"/>
<dbReference type="SGD" id="S000003218">
    <property type="gene designation" value="ZIP2"/>
</dbReference>
<dbReference type="VEuPathDB" id="FungiDB:YGL249W"/>
<dbReference type="eggNOG" id="ENOG502S02Z">
    <property type="taxonomic scope" value="Eukaryota"/>
</dbReference>
<dbReference type="HOGENOM" id="CLU_385036_0_0_1"/>
<dbReference type="InParanoid" id="P53061"/>
<dbReference type="OMA" id="NTSMIPH"/>
<dbReference type="OrthoDB" id="4069286at2759"/>
<dbReference type="BioCyc" id="YEAST:G3O-30719-MONOMER"/>
<dbReference type="BioGRID-ORCS" id="852643">
    <property type="hits" value="0 hits in 10 CRISPR screens"/>
</dbReference>
<dbReference type="PRO" id="PR:P53061"/>
<dbReference type="Proteomes" id="UP000002311">
    <property type="component" value="Chromosome VII"/>
</dbReference>
<dbReference type="RNAct" id="P53061">
    <property type="molecule type" value="protein"/>
</dbReference>
<dbReference type="GO" id="GO:0000794">
    <property type="term" value="C:condensed nuclear chromosome"/>
    <property type="evidence" value="ECO:0000303"/>
    <property type="project" value="ComplexPortal"/>
</dbReference>
<dbReference type="GO" id="GO:0005739">
    <property type="term" value="C:mitochondrion"/>
    <property type="evidence" value="ECO:0007005"/>
    <property type="project" value="SGD"/>
</dbReference>
<dbReference type="GO" id="GO:0106069">
    <property type="term" value="C:synapsis initiation complex"/>
    <property type="evidence" value="ECO:0000303"/>
    <property type="project" value="ComplexPortal"/>
</dbReference>
<dbReference type="GO" id="GO:0000795">
    <property type="term" value="C:synaptonemal complex"/>
    <property type="evidence" value="ECO:0000314"/>
    <property type="project" value="SGD"/>
</dbReference>
<dbReference type="GO" id="GO:0000217">
    <property type="term" value="F:DNA secondary structure binding"/>
    <property type="evidence" value="ECO:0000314"/>
    <property type="project" value="SGD"/>
</dbReference>
<dbReference type="GO" id="GO:0000166">
    <property type="term" value="F:nucleotide binding"/>
    <property type="evidence" value="ECO:0007669"/>
    <property type="project" value="UniProtKB-KW"/>
</dbReference>
<dbReference type="GO" id="GO:0007129">
    <property type="term" value="P:homologous chromosome pairing at meiosis"/>
    <property type="evidence" value="ECO:0000315"/>
    <property type="project" value="SGD"/>
</dbReference>
<dbReference type="GO" id="GO:0035825">
    <property type="term" value="P:homologous recombination"/>
    <property type="evidence" value="ECO:0000303"/>
    <property type="project" value="ComplexPortal"/>
</dbReference>
<dbReference type="GO" id="GO:0033235">
    <property type="term" value="P:positive regulation of protein sumoylation"/>
    <property type="evidence" value="ECO:0000315"/>
    <property type="project" value="SGD"/>
</dbReference>
<dbReference type="GO" id="GO:0016925">
    <property type="term" value="P:protein sumoylation"/>
    <property type="evidence" value="ECO:0000303"/>
    <property type="project" value="ComplexPortal"/>
</dbReference>
<dbReference type="GO" id="GO:0007131">
    <property type="term" value="P:reciprocal meiotic recombination"/>
    <property type="evidence" value="ECO:0000315"/>
    <property type="project" value="SGD"/>
</dbReference>
<dbReference type="GO" id="GO:0090173">
    <property type="term" value="P:regulation of synaptonemal complex assembly"/>
    <property type="evidence" value="ECO:0000303"/>
    <property type="project" value="ComplexPortal"/>
</dbReference>
<dbReference type="GO" id="GO:0007130">
    <property type="term" value="P:synaptonemal complex assembly"/>
    <property type="evidence" value="ECO:0000315"/>
    <property type="project" value="SGD"/>
</dbReference>
<dbReference type="Gene3D" id="3.40.50.10130">
    <property type="match status" value="1"/>
</dbReference>
<evidence type="ECO:0000269" key="1">
    <source>
    </source>
</evidence>
<evidence type="ECO:0000269" key="2">
    <source>
    </source>
</evidence>
<evidence type="ECO:0000269" key="3">
    <source>
    </source>
</evidence>
<evidence type="ECO:0000269" key="4">
    <source>
    </source>
</evidence>
<evidence type="ECO:0000269" key="5">
    <source>
    </source>
</evidence>
<evidence type="ECO:0000269" key="6">
    <source>
    </source>
</evidence>
<evidence type="ECO:0000269" key="7">
    <source>
    </source>
</evidence>
<evidence type="ECO:0000305" key="8"/>
<evidence type="ECO:0007829" key="9">
    <source>
        <dbReference type="PDB" id="6BZG"/>
    </source>
</evidence>
<keyword id="KW-0002">3D-structure</keyword>
<keyword id="KW-0131">Cell cycle</keyword>
<keyword id="KW-0160">Chromosomal rearrangement</keyword>
<keyword id="KW-0158">Chromosome</keyword>
<keyword id="KW-0159">Chromosome partition</keyword>
<keyword id="KW-0238">DNA-binding</keyword>
<keyword id="KW-0469">Meiosis</keyword>
<keyword id="KW-0547">Nucleotide-binding</keyword>
<keyword id="KW-0539">Nucleus</keyword>
<keyword id="KW-1185">Reference proteome</keyword>
<sequence>MIIERWEVKLSKCNQNVGGYSVLSGNLKENIKLGRRAQKYLKELRNLQLKPLKIGGYENCGTINGEEYFLEVIHITSGRQKIDVAVGKTWNVTNIENDNKEELQYELFKEKLKVGKQDMLFFSWMKSLSVQLNAPLHQKMTEHGLADDNTRLEWFNIPLLRRSQYRKKVPYPSLRQMSSVLEVQCSTLTEEKLNFCVGFSDKPLSEWKPQIFEQTYNRYRLQRISPEKSFKYKSRCSKYNFKTSSQSWVVKVPEHDQQLNTFEKRYDELFDAQFNKLEFFKIRMKKLKKNKPIEKKNYKIWCLEKEDLKDLVWDPLKRICNHSRYAIFEHVTINREAYSIKPLRLTFQKLDSGSLDLIDNQKKTFGSIKLAMSMPDVKKTENQSIEESERHDETAIETQEFDENDCLSSKADINTSLAPQKRSFIDNELMSMLVTKKKIKKDKDVSDTGISSTSYLINSGTYANSHIEIPTSNSVYNGKEDCSFNNYSVKHSILEEDIENKCIAVNENKVIENQKVIQSLCKNSHLDLIEQSYFGECDFIINHSTCVYKIQASRFMQLRNNGSLHYDKAVNDLLTEFQRVIIIVEFSEIIQDVDPDLFWKIKLYLLNSRVDVFFIHETTDFFIDWMKYFIARWAFSYNDEKEKNIANADILLDLGFNILLVRKIFQTYSLEEFFMAIIKEESKAVKMLTVSQMTRLKKLLTLEW</sequence>
<accession>P53061</accession>
<accession>D6VV86</accession>
<organism>
    <name type="scientific">Saccharomyces cerevisiae (strain ATCC 204508 / S288c)</name>
    <name type="common">Baker's yeast</name>
    <dbReference type="NCBI Taxonomy" id="559292"/>
    <lineage>
        <taxon>Eukaryota</taxon>
        <taxon>Fungi</taxon>
        <taxon>Dikarya</taxon>
        <taxon>Ascomycota</taxon>
        <taxon>Saccharomycotina</taxon>
        <taxon>Saccharomycetes</taxon>
        <taxon>Saccharomycetales</taxon>
        <taxon>Saccharomycetaceae</taxon>
        <taxon>Saccharomyces</taxon>
    </lineage>
</organism>